<organism>
    <name type="scientific">Mus musculus</name>
    <name type="common">Mouse</name>
    <dbReference type="NCBI Taxonomy" id="10090"/>
    <lineage>
        <taxon>Eukaryota</taxon>
        <taxon>Metazoa</taxon>
        <taxon>Chordata</taxon>
        <taxon>Craniata</taxon>
        <taxon>Vertebrata</taxon>
        <taxon>Euteleostomi</taxon>
        <taxon>Mammalia</taxon>
        <taxon>Eutheria</taxon>
        <taxon>Euarchontoglires</taxon>
        <taxon>Glires</taxon>
        <taxon>Rodentia</taxon>
        <taxon>Myomorpha</taxon>
        <taxon>Muroidea</taxon>
        <taxon>Muridae</taxon>
        <taxon>Murinae</taxon>
        <taxon>Mus</taxon>
        <taxon>Mus</taxon>
    </lineage>
</organism>
<name>UBP2L_MOUSE</name>
<gene>
    <name evidence="10" type="primary">Ubap2l</name>
</gene>
<keyword id="KW-0002">3D-structure</keyword>
<keyword id="KW-0007">Acetylation</keyword>
<keyword id="KW-0025">Alternative splicing</keyword>
<keyword id="KW-0158">Chromosome</keyword>
<keyword id="KW-0963">Cytoplasm</keyword>
<keyword id="KW-0488">Methylation</keyword>
<keyword id="KW-0539">Nucleus</keyword>
<keyword id="KW-0597">Phosphoprotein</keyword>
<keyword id="KW-1185">Reference proteome</keyword>
<reference key="1">
    <citation type="journal article" date="2005" name="Science">
        <title>The transcriptional landscape of the mammalian genome.</title>
        <authorList>
            <person name="Carninci P."/>
            <person name="Kasukawa T."/>
            <person name="Katayama S."/>
            <person name="Gough J."/>
            <person name="Frith M.C."/>
            <person name="Maeda N."/>
            <person name="Oyama R."/>
            <person name="Ravasi T."/>
            <person name="Lenhard B."/>
            <person name="Wells C."/>
            <person name="Kodzius R."/>
            <person name="Shimokawa K."/>
            <person name="Bajic V.B."/>
            <person name="Brenner S.E."/>
            <person name="Batalov S."/>
            <person name="Forrest A.R."/>
            <person name="Zavolan M."/>
            <person name="Davis M.J."/>
            <person name="Wilming L.G."/>
            <person name="Aidinis V."/>
            <person name="Allen J.E."/>
            <person name="Ambesi-Impiombato A."/>
            <person name="Apweiler R."/>
            <person name="Aturaliya R.N."/>
            <person name="Bailey T.L."/>
            <person name="Bansal M."/>
            <person name="Baxter L."/>
            <person name="Beisel K.W."/>
            <person name="Bersano T."/>
            <person name="Bono H."/>
            <person name="Chalk A.M."/>
            <person name="Chiu K.P."/>
            <person name="Choudhary V."/>
            <person name="Christoffels A."/>
            <person name="Clutterbuck D.R."/>
            <person name="Crowe M.L."/>
            <person name="Dalla E."/>
            <person name="Dalrymple B.P."/>
            <person name="de Bono B."/>
            <person name="Della Gatta G."/>
            <person name="di Bernardo D."/>
            <person name="Down T."/>
            <person name="Engstrom P."/>
            <person name="Fagiolini M."/>
            <person name="Faulkner G."/>
            <person name="Fletcher C.F."/>
            <person name="Fukushima T."/>
            <person name="Furuno M."/>
            <person name="Futaki S."/>
            <person name="Gariboldi M."/>
            <person name="Georgii-Hemming P."/>
            <person name="Gingeras T.R."/>
            <person name="Gojobori T."/>
            <person name="Green R.E."/>
            <person name="Gustincich S."/>
            <person name="Harbers M."/>
            <person name="Hayashi Y."/>
            <person name="Hensch T.K."/>
            <person name="Hirokawa N."/>
            <person name="Hill D."/>
            <person name="Huminiecki L."/>
            <person name="Iacono M."/>
            <person name="Ikeo K."/>
            <person name="Iwama A."/>
            <person name="Ishikawa T."/>
            <person name="Jakt M."/>
            <person name="Kanapin A."/>
            <person name="Katoh M."/>
            <person name="Kawasawa Y."/>
            <person name="Kelso J."/>
            <person name="Kitamura H."/>
            <person name="Kitano H."/>
            <person name="Kollias G."/>
            <person name="Krishnan S.P."/>
            <person name="Kruger A."/>
            <person name="Kummerfeld S.K."/>
            <person name="Kurochkin I.V."/>
            <person name="Lareau L.F."/>
            <person name="Lazarevic D."/>
            <person name="Lipovich L."/>
            <person name="Liu J."/>
            <person name="Liuni S."/>
            <person name="McWilliam S."/>
            <person name="Madan Babu M."/>
            <person name="Madera M."/>
            <person name="Marchionni L."/>
            <person name="Matsuda H."/>
            <person name="Matsuzawa S."/>
            <person name="Miki H."/>
            <person name="Mignone F."/>
            <person name="Miyake S."/>
            <person name="Morris K."/>
            <person name="Mottagui-Tabar S."/>
            <person name="Mulder N."/>
            <person name="Nakano N."/>
            <person name="Nakauchi H."/>
            <person name="Ng P."/>
            <person name="Nilsson R."/>
            <person name="Nishiguchi S."/>
            <person name="Nishikawa S."/>
            <person name="Nori F."/>
            <person name="Ohara O."/>
            <person name="Okazaki Y."/>
            <person name="Orlando V."/>
            <person name="Pang K.C."/>
            <person name="Pavan W.J."/>
            <person name="Pavesi G."/>
            <person name="Pesole G."/>
            <person name="Petrovsky N."/>
            <person name="Piazza S."/>
            <person name="Reed J."/>
            <person name="Reid J.F."/>
            <person name="Ring B.Z."/>
            <person name="Ringwald M."/>
            <person name="Rost B."/>
            <person name="Ruan Y."/>
            <person name="Salzberg S.L."/>
            <person name="Sandelin A."/>
            <person name="Schneider C."/>
            <person name="Schoenbach C."/>
            <person name="Sekiguchi K."/>
            <person name="Semple C.A."/>
            <person name="Seno S."/>
            <person name="Sessa L."/>
            <person name="Sheng Y."/>
            <person name="Shibata Y."/>
            <person name="Shimada H."/>
            <person name="Shimada K."/>
            <person name="Silva D."/>
            <person name="Sinclair B."/>
            <person name="Sperling S."/>
            <person name="Stupka E."/>
            <person name="Sugiura K."/>
            <person name="Sultana R."/>
            <person name="Takenaka Y."/>
            <person name="Taki K."/>
            <person name="Tammoja K."/>
            <person name="Tan S.L."/>
            <person name="Tang S."/>
            <person name="Taylor M.S."/>
            <person name="Tegner J."/>
            <person name="Teichmann S.A."/>
            <person name="Ueda H.R."/>
            <person name="van Nimwegen E."/>
            <person name="Verardo R."/>
            <person name="Wei C.L."/>
            <person name="Yagi K."/>
            <person name="Yamanishi H."/>
            <person name="Zabarovsky E."/>
            <person name="Zhu S."/>
            <person name="Zimmer A."/>
            <person name="Hide W."/>
            <person name="Bult C."/>
            <person name="Grimmond S.M."/>
            <person name="Teasdale R.D."/>
            <person name="Liu E.T."/>
            <person name="Brusic V."/>
            <person name="Quackenbush J."/>
            <person name="Wahlestedt C."/>
            <person name="Mattick J.S."/>
            <person name="Hume D.A."/>
            <person name="Kai C."/>
            <person name="Sasaki D."/>
            <person name="Tomaru Y."/>
            <person name="Fukuda S."/>
            <person name="Kanamori-Katayama M."/>
            <person name="Suzuki M."/>
            <person name="Aoki J."/>
            <person name="Arakawa T."/>
            <person name="Iida J."/>
            <person name="Imamura K."/>
            <person name="Itoh M."/>
            <person name="Kato T."/>
            <person name="Kawaji H."/>
            <person name="Kawagashira N."/>
            <person name="Kawashima T."/>
            <person name="Kojima M."/>
            <person name="Kondo S."/>
            <person name="Konno H."/>
            <person name="Nakano K."/>
            <person name="Ninomiya N."/>
            <person name="Nishio T."/>
            <person name="Okada M."/>
            <person name="Plessy C."/>
            <person name="Shibata K."/>
            <person name="Shiraki T."/>
            <person name="Suzuki S."/>
            <person name="Tagami M."/>
            <person name="Waki K."/>
            <person name="Watahiki A."/>
            <person name="Okamura-Oho Y."/>
            <person name="Suzuki H."/>
            <person name="Kawai J."/>
            <person name="Hayashizaki Y."/>
        </authorList>
    </citation>
    <scope>NUCLEOTIDE SEQUENCE [LARGE SCALE MRNA] (ISOFORMS 2 AND 5)</scope>
    <source>
        <strain>C57BL/6J</strain>
        <tissue>Embryonic head</tissue>
        <tissue>Thymus</tissue>
    </source>
</reference>
<reference key="2">
    <citation type="journal article" date="2004" name="Genome Res.">
        <title>The status, quality, and expansion of the NIH full-length cDNA project: the Mammalian Gene Collection (MGC).</title>
        <authorList>
            <consortium name="The MGC Project Team"/>
        </authorList>
    </citation>
    <scope>NUCLEOTIDE SEQUENCE [LARGE SCALE MRNA] (ISOFORMS 1; 3 AND 4)</scope>
    <scope>VARIANT SER-374</scope>
    <source>
        <strain>C57BL/6J</strain>
        <strain>FVB/N</strain>
        <tissue>Brain</tissue>
        <tissue>Eye</tissue>
        <tissue>Mammary gland</tissue>
        <tissue>Mammary tumor</tissue>
    </source>
</reference>
<reference key="3">
    <citation type="journal article" date="2005" name="Nat. Biotechnol.">
        <title>Immunoaffinity profiling of tyrosine phosphorylation in cancer cells.</title>
        <authorList>
            <person name="Rush J."/>
            <person name="Moritz A."/>
            <person name="Lee K.A."/>
            <person name="Guo A."/>
            <person name="Goss V.L."/>
            <person name="Spek E.J."/>
            <person name="Zhang H."/>
            <person name="Zha X.-M."/>
            <person name="Polakiewicz R.D."/>
            <person name="Comb M.J."/>
        </authorList>
    </citation>
    <scope>IDENTIFICATION BY MASS SPECTROMETRY [LARGE SCALE ANALYSIS]</scope>
</reference>
<reference key="4">
    <citation type="journal article" date="2007" name="Proc. Natl. Acad. Sci. U.S.A.">
        <title>Large-scale phosphorylation analysis of mouse liver.</title>
        <authorList>
            <person name="Villen J."/>
            <person name="Beausoleil S.A."/>
            <person name="Gerber S.A."/>
            <person name="Gygi S.P."/>
        </authorList>
    </citation>
    <scope>PHOSPHORYLATION [LARGE SCALE ANALYSIS] AT SER-497</scope>
    <scope>IDENTIFICATION BY MASS SPECTROMETRY [LARGE SCALE ANALYSIS]</scope>
    <source>
        <tissue>Liver</tissue>
    </source>
</reference>
<reference key="5">
    <citation type="journal article" date="2009" name="Immunity">
        <title>The phagosomal proteome in interferon-gamma-activated macrophages.</title>
        <authorList>
            <person name="Trost M."/>
            <person name="English L."/>
            <person name="Lemieux S."/>
            <person name="Courcelles M."/>
            <person name="Desjardins M."/>
            <person name="Thibault P."/>
        </authorList>
    </citation>
    <scope>IDENTIFICATION BY MASS SPECTROMETRY [LARGE SCALE ANALYSIS]</scope>
</reference>
<reference key="6">
    <citation type="journal article" date="2009" name="Mol. Cell. Proteomics">
        <title>Large scale localization of protein phosphorylation by use of electron capture dissociation mass spectrometry.</title>
        <authorList>
            <person name="Sweet S.M."/>
            <person name="Bailey C.M."/>
            <person name="Cunningham D.L."/>
            <person name="Heath J.K."/>
            <person name="Cooper H.J."/>
        </authorList>
    </citation>
    <scope>PHOSPHORYLATION [LARGE SCALE ANALYSIS] AT SER-625 AND SER-629</scope>
    <scope>IDENTIFICATION BY MASS SPECTROMETRY [LARGE SCALE ANALYSIS]</scope>
    <source>
        <tissue>Embryonic fibroblast</tissue>
    </source>
</reference>
<reference key="7">
    <citation type="journal article" date="2010" name="Cell">
        <title>A tissue-specific atlas of mouse protein phosphorylation and expression.</title>
        <authorList>
            <person name="Huttlin E.L."/>
            <person name="Jedrychowski M.P."/>
            <person name="Elias J.E."/>
            <person name="Goswami T."/>
            <person name="Rad R."/>
            <person name="Beausoleil S.A."/>
            <person name="Villen J."/>
            <person name="Haas W."/>
            <person name="Sowa M.E."/>
            <person name="Gygi S.P."/>
        </authorList>
    </citation>
    <scope>PHOSPHORYLATION [LARGE SCALE ANALYSIS] AT SER-436; SER-487; SER-497 AND SER-879</scope>
    <scope>IDENTIFICATION BY MASS SPECTROMETRY [LARGE SCALE ANALYSIS]</scope>
    <source>
        <tissue>Brain</tissue>
        <tissue>Brown adipose tissue</tissue>
        <tissue>Heart</tissue>
        <tissue>Kidney</tissue>
        <tissue>Liver</tissue>
        <tissue>Lung</tissue>
        <tissue>Pancreas</tissue>
        <tissue>Spleen</tissue>
        <tissue>Testis</tissue>
    </source>
</reference>
<reference key="8">
    <citation type="journal article" date="2014" name="Blood">
        <title>UBAP2L is a novel BMI1-interacting protein essential for hematopoietic stem cell activity.</title>
        <authorList>
            <person name="Bordeleau M.E."/>
            <person name="Aucagne R."/>
            <person name="Chagraoui J."/>
            <person name="Girard S."/>
            <person name="Mayotte N."/>
            <person name="Bonneil E."/>
            <person name="Thibault P."/>
            <person name="Pabst C."/>
            <person name="Bergeron A."/>
            <person name="Barabe F."/>
            <person name="Hebert J."/>
            <person name="Sauvageau M."/>
            <person name="Boutonnet C."/>
            <person name="Meloche S."/>
            <person name="Sauvageau G."/>
        </authorList>
    </citation>
    <scope>FUNCTION</scope>
</reference>
<reference key="9">
    <citation type="journal article" date="2022" name="Sci. Adv.">
        <title>De novo variants in genes regulating stress granule assembly associate with neurodevelopmental disorders.</title>
        <authorList>
            <person name="Jia X."/>
            <person name="Zhang S."/>
            <person name="Tan S."/>
            <person name="Du B."/>
            <person name="He M."/>
            <person name="Qin H."/>
            <person name="Chen J."/>
            <person name="Duan X."/>
            <person name="Luo J."/>
            <person name="Chen F."/>
            <person name="Ouyang L."/>
            <person name="Wang J."/>
            <person name="Chen G."/>
            <person name="Yu B."/>
            <person name="Zhang G."/>
            <person name="Zhang Z."/>
            <person name="Lyu Y."/>
            <person name="Huang Y."/>
            <person name="Jiao J."/>
            <person name="Chen J.Y.H."/>
            <person name="Swoboda K.J."/>
            <person name="Agolini E."/>
            <person name="Novelli A."/>
            <person name="Leoni C."/>
            <person name="Zampino G."/>
            <person name="Cappuccio G."/>
            <person name="Brunetti-Pierri N."/>
            <person name="Gerard B."/>
            <person name="Ginglinger E."/>
            <person name="Richer J."/>
            <person name="McMillan H."/>
            <person name="White-Brown A."/>
            <person name="Hoekzema K."/>
            <person name="Bernier R.A."/>
            <person name="Kurtz-Nelson E.C."/>
            <person name="Earl R.K."/>
            <person name="Meddens C."/>
            <person name="Alders M."/>
            <person name="Fuchs M."/>
            <person name="Caumes R."/>
            <person name="Brunelle P."/>
            <person name="Smol T."/>
            <person name="Kuehl R."/>
            <person name="Day-Salvatore D.L."/>
            <person name="Monaghan K.G."/>
            <person name="Morrow M.M."/>
            <person name="Eichler E.E."/>
            <person name="Hu Z."/>
            <person name="Yuan L."/>
            <person name="Tan J."/>
            <person name="Xia K."/>
            <person name="Shen Y."/>
            <person name="Guo H."/>
        </authorList>
    </citation>
    <scope>FUNCTION</scope>
    <scope>DISRUPTION PHENOTYPE</scope>
</reference>
<reference key="10">
    <citation type="submission" date="2005-09" db="PDB data bank">
        <title>Solution structure of RSGI RUH-015, a UBA domain from mouse cDNA.</title>
        <authorList>
            <consortium name="RIKEN structural genomics initiative (RSGI)"/>
        </authorList>
    </citation>
    <scope>STRUCTURE BY NMR OF 19-109</scope>
</reference>
<evidence type="ECO:0000250" key="1">
    <source>
        <dbReference type="UniProtKB" id="Q14157"/>
    </source>
</evidence>
<evidence type="ECO:0000255" key="2">
    <source>
        <dbReference type="PROSITE-ProRule" id="PRU00212"/>
    </source>
</evidence>
<evidence type="ECO:0000256" key="3">
    <source>
        <dbReference type="SAM" id="MobiDB-lite"/>
    </source>
</evidence>
<evidence type="ECO:0000269" key="4">
    <source>
    </source>
</evidence>
<evidence type="ECO:0000269" key="5">
    <source>
    </source>
</evidence>
<evidence type="ECO:0000269" key="6">
    <source>
    </source>
</evidence>
<evidence type="ECO:0000303" key="7">
    <source>
    </source>
</evidence>
<evidence type="ECO:0000303" key="8">
    <source>
    </source>
</evidence>
<evidence type="ECO:0000305" key="9"/>
<evidence type="ECO:0000312" key="10">
    <source>
        <dbReference type="MGI" id="MGI:1921633"/>
    </source>
</evidence>
<evidence type="ECO:0007744" key="11">
    <source>
    </source>
</evidence>
<evidence type="ECO:0007744" key="12">
    <source>
    </source>
</evidence>
<evidence type="ECO:0007744" key="13">
    <source>
    </source>
</evidence>
<evidence type="ECO:0007829" key="14">
    <source>
        <dbReference type="PDB" id="1WJ7"/>
    </source>
</evidence>
<accession>Q80X50</accession>
<accession>Q8BIT6</accession>
<accession>Q8BIW4</accession>
<accession>Q8BJ01</accession>
<accession>Q8CIG7</accession>
<accession>Q8K102</accession>
<accession>Q9CRT6</accession>
<dbReference type="EMBL" id="AK014274">
    <property type="protein sequence ID" value="BAB29236.1"/>
    <property type="molecule type" value="mRNA"/>
</dbReference>
<dbReference type="EMBL" id="AK048286">
    <property type="protein sequence ID" value="BAC33295.1"/>
    <property type="molecule type" value="mRNA"/>
</dbReference>
<dbReference type="EMBL" id="AK079895">
    <property type="protein sequence ID" value="BAC37777.1"/>
    <property type="status" value="ALT_FRAME"/>
    <property type="molecule type" value="mRNA"/>
</dbReference>
<dbReference type="EMBL" id="AK088702">
    <property type="protein sequence ID" value="BAC40514.1"/>
    <property type="molecule type" value="mRNA"/>
</dbReference>
<dbReference type="EMBL" id="BC023906">
    <property type="protein sequence ID" value="AAH23906.1"/>
    <property type="molecule type" value="mRNA"/>
</dbReference>
<dbReference type="EMBL" id="BC029075">
    <property type="protein sequence ID" value="AAH29075.1"/>
    <property type="molecule type" value="mRNA"/>
</dbReference>
<dbReference type="EMBL" id="BC050910">
    <property type="protein sequence ID" value="AAH50910.1"/>
    <property type="molecule type" value="mRNA"/>
</dbReference>
<dbReference type="CCDS" id="CCDS38498.1">
    <molecule id="Q80X50-4"/>
</dbReference>
<dbReference type="CCDS" id="CCDS50965.1">
    <molecule id="Q80X50-2"/>
</dbReference>
<dbReference type="CCDS" id="CCDS50966.1">
    <molecule id="Q80X50-5"/>
</dbReference>
<dbReference type="CCDS" id="CCDS79960.1">
    <molecule id="Q80X50-1"/>
</dbReference>
<dbReference type="RefSeq" id="NP_001159455.1">
    <molecule id="Q80X50-5"/>
    <property type="nucleotide sequence ID" value="NM_001165983.2"/>
</dbReference>
<dbReference type="RefSeq" id="NP_001159456.1">
    <molecule id="Q80X50-1"/>
    <property type="nucleotide sequence ID" value="NM_001165984.1"/>
</dbReference>
<dbReference type="RefSeq" id="NP_001159457.1">
    <molecule id="Q80X50-2"/>
    <property type="nucleotide sequence ID" value="NM_001165985.2"/>
</dbReference>
<dbReference type="RefSeq" id="NP_001159458.1">
    <molecule id="Q80X50-2"/>
    <property type="nucleotide sequence ID" value="NM_001165986.1"/>
</dbReference>
<dbReference type="RefSeq" id="NP_082751.1">
    <molecule id="Q80X50-4"/>
    <property type="nucleotide sequence ID" value="NM_028475.3"/>
</dbReference>
<dbReference type="RefSeq" id="XP_006502235.1">
    <property type="nucleotide sequence ID" value="XM_006502172.2"/>
</dbReference>
<dbReference type="PDB" id="1WJ7">
    <property type="method" value="NMR"/>
    <property type="chains" value="A=19-109"/>
</dbReference>
<dbReference type="PDBsum" id="1WJ7"/>
<dbReference type="SMR" id="Q80X50"/>
<dbReference type="BioGRID" id="216707">
    <property type="interactions" value="33"/>
</dbReference>
<dbReference type="FunCoup" id="Q80X50">
    <property type="interactions" value="6117"/>
</dbReference>
<dbReference type="IntAct" id="Q80X50">
    <property type="interactions" value="7"/>
</dbReference>
<dbReference type="MINT" id="Q80X50"/>
<dbReference type="STRING" id="10090.ENSMUSP00000066138"/>
<dbReference type="GlyGen" id="Q80X50">
    <property type="glycosylation" value="28 sites, 2 N-linked glycans (2 sites), 1 O-linked glycan (24 sites)"/>
</dbReference>
<dbReference type="iPTMnet" id="Q80X50"/>
<dbReference type="PhosphoSitePlus" id="Q80X50"/>
<dbReference type="SwissPalm" id="Q80X50"/>
<dbReference type="jPOST" id="Q80X50"/>
<dbReference type="PaxDb" id="10090-ENSMUSP00000066138"/>
<dbReference type="PeptideAtlas" id="Q80X50"/>
<dbReference type="ProteomicsDB" id="298101">
    <molecule id="Q80X50-1"/>
</dbReference>
<dbReference type="ProteomicsDB" id="298102">
    <molecule id="Q80X50-2"/>
</dbReference>
<dbReference type="ProteomicsDB" id="298103">
    <molecule id="Q80X50-3"/>
</dbReference>
<dbReference type="ProteomicsDB" id="298104">
    <molecule id="Q80X50-4"/>
</dbReference>
<dbReference type="ProteomicsDB" id="298105">
    <molecule id="Q80X50-5"/>
</dbReference>
<dbReference type="Pumba" id="Q80X50"/>
<dbReference type="Antibodypedia" id="34148">
    <property type="antibodies" value="198 antibodies from 26 providers"/>
</dbReference>
<dbReference type="Ensembl" id="ENSMUST00000029553.16">
    <molecule id="Q80X50-4"/>
    <property type="protein sequence ID" value="ENSMUSP00000029553.10"/>
    <property type="gene ID" value="ENSMUSG00000042520.17"/>
</dbReference>
<dbReference type="Ensembl" id="ENSMUST00000064639.15">
    <molecule id="Q80X50-5"/>
    <property type="protein sequence ID" value="ENSMUSP00000066138.9"/>
    <property type="gene ID" value="ENSMUSG00000042520.17"/>
</dbReference>
<dbReference type="Ensembl" id="ENSMUST00000195995.5">
    <molecule id="Q80X50-2"/>
    <property type="protein sequence ID" value="ENSMUSP00000143638.2"/>
    <property type="gene ID" value="ENSMUSG00000042520.17"/>
</dbReference>
<dbReference type="Ensembl" id="ENSMUST00000196843.5">
    <molecule id="Q80X50-1"/>
    <property type="protein sequence ID" value="ENSMUSP00000143459.2"/>
    <property type="gene ID" value="ENSMUSG00000042520.17"/>
</dbReference>
<dbReference type="Ensembl" id="ENSMUST00000199834.5">
    <molecule id="Q80X50-2"/>
    <property type="protein sequence ID" value="ENSMUSP00000143254.2"/>
    <property type="gene ID" value="ENSMUSG00000042520.17"/>
</dbReference>
<dbReference type="GeneID" id="74383"/>
<dbReference type="KEGG" id="mmu:74383"/>
<dbReference type="UCSC" id="uc008qal.2">
    <molecule id="Q80X50-4"/>
    <property type="organism name" value="mouse"/>
</dbReference>
<dbReference type="UCSC" id="uc008qam.2">
    <molecule id="Q80X50-3"/>
    <property type="organism name" value="mouse"/>
</dbReference>
<dbReference type="UCSC" id="uc008qao.2">
    <molecule id="Q80X50-1"/>
    <property type="organism name" value="mouse"/>
</dbReference>
<dbReference type="UCSC" id="uc008qap.2">
    <molecule id="Q80X50-5"/>
    <property type="organism name" value="mouse"/>
</dbReference>
<dbReference type="UCSC" id="uc008qas.2">
    <molecule id="Q80X50-2"/>
    <property type="organism name" value="mouse"/>
</dbReference>
<dbReference type="AGR" id="MGI:1921633"/>
<dbReference type="CTD" id="9898"/>
<dbReference type="MGI" id="MGI:1921633">
    <property type="gene designation" value="Ubap2l"/>
</dbReference>
<dbReference type="VEuPathDB" id="HostDB:ENSMUSG00000042520"/>
<dbReference type="eggNOG" id="ENOG502QPRH">
    <property type="taxonomic scope" value="Eukaryota"/>
</dbReference>
<dbReference type="GeneTree" id="ENSGT00390000003453"/>
<dbReference type="InParanoid" id="Q80X50"/>
<dbReference type="OMA" id="TYSSGIM"/>
<dbReference type="OrthoDB" id="87301at9989"/>
<dbReference type="PhylomeDB" id="Q80X50"/>
<dbReference type="TreeFam" id="TF328468"/>
<dbReference type="BioGRID-ORCS" id="74383">
    <property type="hits" value="9 hits in 77 CRISPR screens"/>
</dbReference>
<dbReference type="ChiTaRS" id="Ubap2l">
    <property type="organism name" value="mouse"/>
</dbReference>
<dbReference type="EvolutionaryTrace" id="Q80X50"/>
<dbReference type="PRO" id="PR:Q80X50"/>
<dbReference type="Proteomes" id="UP000000589">
    <property type="component" value="Chromosome 3"/>
</dbReference>
<dbReference type="RNAct" id="Q80X50">
    <property type="molecule type" value="protein"/>
</dbReference>
<dbReference type="Bgee" id="ENSMUSG00000042520">
    <property type="expression patterns" value="Expressed in embryonic post-anal tail and 264 other cell types or tissues"/>
</dbReference>
<dbReference type="ExpressionAtlas" id="Q80X50">
    <property type="expression patterns" value="baseline and differential"/>
</dbReference>
<dbReference type="GO" id="GO:0005694">
    <property type="term" value="C:chromosome"/>
    <property type="evidence" value="ECO:0007669"/>
    <property type="project" value="UniProtKB-SubCell"/>
</dbReference>
<dbReference type="GO" id="GO:0010494">
    <property type="term" value="C:cytoplasmic stress granule"/>
    <property type="evidence" value="ECO:0007669"/>
    <property type="project" value="UniProtKB-SubCell"/>
</dbReference>
<dbReference type="GO" id="GO:0031519">
    <property type="term" value="C:PcG protein complex"/>
    <property type="evidence" value="ECO:0000266"/>
    <property type="project" value="MGI"/>
</dbReference>
<dbReference type="GO" id="GO:0007339">
    <property type="term" value="P:binding of sperm to zona pellucida"/>
    <property type="evidence" value="ECO:0007669"/>
    <property type="project" value="Ensembl"/>
</dbReference>
<dbReference type="GO" id="GO:0061484">
    <property type="term" value="P:hematopoietic stem cell homeostasis"/>
    <property type="evidence" value="ECO:0000315"/>
    <property type="project" value="MGI"/>
</dbReference>
<dbReference type="GO" id="GO:0062029">
    <property type="term" value="P:positive regulation of stress granule assembly"/>
    <property type="evidence" value="ECO:0000250"/>
    <property type="project" value="UniProtKB"/>
</dbReference>
<dbReference type="GO" id="GO:0034063">
    <property type="term" value="P:stress granule assembly"/>
    <property type="evidence" value="ECO:0000250"/>
    <property type="project" value="UniProtKB"/>
</dbReference>
<dbReference type="CDD" id="cd14277">
    <property type="entry name" value="UBA_UBP2_like"/>
    <property type="match status" value="1"/>
</dbReference>
<dbReference type="FunFam" id="1.10.8.10:FF:000004">
    <property type="entry name" value="ubiquitin-associated protein 2-like isoform X1"/>
    <property type="match status" value="1"/>
</dbReference>
<dbReference type="Gene3D" id="1.10.8.10">
    <property type="entry name" value="DNA helicase RuvA subunit, C-terminal domain"/>
    <property type="match status" value="1"/>
</dbReference>
<dbReference type="InterPro" id="IPR051833">
    <property type="entry name" value="TC-DDR_regulator"/>
</dbReference>
<dbReference type="InterPro" id="IPR015940">
    <property type="entry name" value="UBA"/>
</dbReference>
<dbReference type="InterPro" id="IPR009060">
    <property type="entry name" value="UBA-like_sf"/>
</dbReference>
<dbReference type="InterPro" id="IPR022166">
    <property type="entry name" value="UBAP2/Lig"/>
</dbReference>
<dbReference type="PANTHER" id="PTHR16308">
    <property type="entry name" value="UBIQUITIN ASSOCIATED PROTEIN 2-LIKE/LINGERER"/>
    <property type="match status" value="1"/>
</dbReference>
<dbReference type="PANTHER" id="PTHR16308:SF18">
    <property type="entry name" value="UBIQUITIN-ASSOCIATED PROTEIN 2-LIKE"/>
    <property type="match status" value="1"/>
</dbReference>
<dbReference type="Pfam" id="PF12478">
    <property type="entry name" value="UBAP2-Lig"/>
    <property type="match status" value="1"/>
</dbReference>
<dbReference type="SMART" id="SM00165">
    <property type="entry name" value="UBA"/>
    <property type="match status" value="1"/>
</dbReference>
<dbReference type="SUPFAM" id="SSF46934">
    <property type="entry name" value="UBA-like"/>
    <property type="match status" value="1"/>
</dbReference>
<dbReference type="PROSITE" id="PS50030">
    <property type="entry name" value="UBA"/>
    <property type="match status" value="1"/>
</dbReference>
<protein>
    <recommendedName>
        <fullName evidence="9">Ubiquitin-associated protein 2-like</fullName>
    </recommendedName>
    <alternativeName>
        <fullName evidence="1">RNA polymerase II degradation factor Ubap2l</fullName>
    </alternativeName>
</protein>
<feature type="chain" id="PRO_0000240665" description="Ubiquitin-associated protein 2-like">
    <location>
        <begin position="1"/>
        <end position="1107"/>
    </location>
</feature>
<feature type="domain" description="UBA" evidence="2">
    <location>
        <begin position="49"/>
        <end position="89"/>
    </location>
</feature>
<feature type="region of interest" description="Disordered" evidence="3">
    <location>
        <begin position="1"/>
        <end position="33"/>
    </location>
</feature>
<feature type="region of interest" description="Disordered" evidence="3">
    <location>
        <begin position="92"/>
        <end position="229"/>
    </location>
</feature>
<feature type="region of interest" description="Disordered" evidence="3">
    <location>
        <begin position="461"/>
        <end position="513"/>
    </location>
</feature>
<feature type="region of interest" description="Disordered" evidence="3">
    <location>
        <begin position="550"/>
        <end position="676"/>
    </location>
</feature>
<feature type="region of interest" description="Disordered" evidence="3">
    <location>
        <begin position="689"/>
        <end position="814"/>
    </location>
</feature>
<feature type="region of interest" description="Disordered" evidence="3">
    <location>
        <begin position="885"/>
        <end position="921"/>
    </location>
</feature>
<feature type="region of interest" description="Disordered" evidence="3">
    <location>
        <begin position="1060"/>
        <end position="1107"/>
    </location>
</feature>
<feature type="compositionally biased region" description="Basic and acidic residues" evidence="3">
    <location>
        <begin position="118"/>
        <end position="132"/>
    </location>
</feature>
<feature type="compositionally biased region" description="Basic residues" evidence="3">
    <location>
        <begin position="133"/>
        <end position="145"/>
    </location>
</feature>
<feature type="compositionally biased region" description="Low complexity" evidence="3">
    <location>
        <begin position="213"/>
        <end position="226"/>
    </location>
</feature>
<feature type="compositionally biased region" description="Low complexity" evidence="3">
    <location>
        <begin position="494"/>
        <end position="505"/>
    </location>
</feature>
<feature type="compositionally biased region" description="Low complexity" evidence="3">
    <location>
        <begin position="554"/>
        <end position="589"/>
    </location>
</feature>
<feature type="compositionally biased region" description="Polar residues" evidence="3">
    <location>
        <begin position="590"/>
        <end position="656"/>
    </location>
</feature>
<feature type="compositionally biased region" description="Low complexity" evidence="3">
    <location>
        <begin position="665"/>
        <end position="675"/>
    </location>
</feature>
<feature type="compositionally biased region" description="Polar residues" evidence="3">
    <location>
        <begin position="689"/>
        <end position="713"/>
    </location>
</feature>
<feature type="compositionally biased region" description="Low complexity" evidence="3">
    <location>
        <begin position="714"/>
        <end position="804"/>
    </location>
</feature>
<feature type="compositionally biased region" description="Low complexity" evidence="3">
    <location>
        <begin position="893"/>
        <end position="916"/>
    </location>
</feature>
<feature type="compositionally biased region" description="Low complexity" evidence="3">
    <location>
        <begin position="1073"/>
        <end position="1087"/>
    </location>
</feature>
<feature type="compositionally biased region" description="Polar residues" evidence="3">
    <location>
        <begin position="1088"/>
        <end position="1107"/>
    </location>
</feature>
<feature type="modified residue" description="N-acetylmethionine" evidence="1">
    <location>
        <position position="1"/>
    </location>
</feature>
<feature type="modified residue" description="Asymmetric dimethylarginine" evidence="1">
    <location>
        <position position="187"/>
    </location>
</feature>
<feature type="modified residue" description="Asymmetric dimethylarginine" evidence="1">
    <location>
        <position position="190"/>
    </location>
</feature>
<feature type="modified residue" description="Phosphoserine" evidence="1">
    <location>
        <position position="376"/>
    </location>
</feature>
<feature type="modified residue" description="Phosphoserine" evidence="1">
    <location>
        <position position="380"/>
    </location>
</feature>
<feature type="modified residue" description="Phosphoserine" evidence="13">
    <location>
        <position position="436"/>
    </location>
</feature>
<feature type="modified residue" description="Phosphothreonine" evidence="1">
    <location>
        <position position="445"/>
    </location>
</feature>
<feature type="modified residue" description="Phosphoserine" evidence="1">
    <location>
        <position position="474"/>
    </location>
</feature>
<feature type="modified residue" description="Phosphoserine" evidence="13">
    <location>
        <position position="487"/>
    </location>
</feature>
<feature type="modified residue" description="Phosphoserine" evidence="1">
    <location>
        <position position="490"/>
    </location>
</feature>
<feature type="modified residue" description="Phosphoserine" evidence="1">
    <location>
        <position position="491"/>
    </location>
</feature>
<feature type="modified residue" description="Phosphoserine" evidence="11 13">
    <location>
        <position position="497"/>
    </location>
</feature>
<feature type="modified residue" description="Phosphoserine" evidence="1">
    <location>
        <position position="624"/>
    </location>
</feature>
<feature type="modified residue" description="Phosphoserine" evidence="12">
    <location>
        <position position="625"/>
    </location>
</feature>
<feature type="modified residue" description="Phosphoserine" evidence="1">
    <location>
        <position position="628"/>
    </location>
</feature>
<feature type="modified residue" description="Phosphoserine" evidence="12">
    <location>
        <position position="629"/>
    </location>
</feature>
<feature type="modified residue" description="Phosphoserine" evidence="1">
    <location>
        <position position="872"/>
    </location>
</feature>
<feature type="modified residue" description="Phosphoserine" evidence="13">
    <location>
        <position position="879"/>
    </location>
</feature>
<feature type="splice variant" id="VSP_019418" description="In isoform 2." evidence="8">
    <original>F</original>
    <variation>CMHGALSKPAVV</variation>
    <location>
        <position position="150"/>
    </location>
</feature>
<feature type="splice variant" id="VSP_019419" description="In isoform 3." evidence="7">
    <original>RLDFIGVEGSNYPRKFETAPG</original>
    <variation>S</variation>
    <location>
        <begin position="235"/>
        <end position="255"/>
    </location>
</feature>
<feature type="splice variant" id="VSP_019420" description="In isoform 5." evidence="8">
    <original>G</original>
    <variation>GMIHPG</variation>
    <location>
        <position position="255"/>
    </location>
</feature>
<feature type="splice variant" id="VSP_019421" description="In isoform 2." evidence="8">
    <original>VSVTSSNTGVPDISGSVYSKTQQSFEKQGFHSGTPAASFNLPSALGSGGPINPATAAAYPPAPFMHILTPHQQPHSQILHHHLQQDGQTGSGQRSQTSSIPQKPQTNKSAYNSYSWGAN</original>
    <variation>RKYPPPYKHFWTAES</variation>
    <location>
        <begin position="989"/>
        <end position="1107"/>
    </location>
</feature>
<feature type="splice variant" id="VSP_019422" description="In isoform 3." evidence="7">
    <original>TGSGQRSQTSSIPQKPQTNKSAYNSYSWGAN</original>
    <variation>DILTLVDDQLGE</variation>
    <location>
        <begin position="1077"/>
        <end position="1107"/>
    </location>
</feature>
<feature type="splice variant" id="VSP_019423" description="In isoform 4." evidence="7">
    <original>TGSGQRSQTSSIPQKPQTNKSAYNSYSWGAN</original>
    <variation>LPYLQMILCCQRQQEEQDILTLVDDQLGE</variation>
    <location>
        <begin position="1077"/>
        <end position="1107"/>
    </location>
</feature>
<feature type="sequence variant" description="In strain: FVB/N." evidence="4">
    <original>G</original>
    <variation>S</variation>
    <location>
        <position position="374"/>
    </location>
</feature>
<feature type="sequence conflict" description="In Ref. 1; BAC33295." evidence="9" ref="1">
    <original>D</original>
    <variation>G</variation>
    <location>
        <position position="303"/>
    </location>
</feature>
<feature type="sequence conflict" description="In Ref. 2; AAH23906." evidence="9" ref="2">
    <location>
        <position position="1010"/>
    </location>
</feature>
<feature type="strand" evidence="14">
    <location>
        <begin position="28"/>
        <end position="32"/>
    </location>
</feature>
<feature type="helix" evidence="14">
    <location>
        <begin position="33"/>
        <end position="44"/>
    </location>
</feature>
<feature type="helix" evidence="14">
    <location>
        <begin position="48"/>
        <end position="60"/>
    </location>
</feature>
<feature type="helix" evidence="14">
    <location>
        <begin position="65"/>
        <end position="75"/>
    </location>
</feature>
<feature type="helix" evidence="14">
    <location>
        <begin position="79"/>
        <end position="87"/>
    </location>
</feature>
<feature type="strand" evidence="14">
    <location>
        <begin position="90"/>
        <end position="92"/>
    </location>
</feature>
<feature type="strand" evidence="14">
    <location>
        <begin position="105"/>
        <end position="109"/>
    </location>
</feature>
<comment type="function">
    <text evidence="1 5 6">Recruits the ubiquitination machinery to RNA polymerase II for polyubiquitination, removal and degradation, when the transcription-coupled nucleotide excision repair (TC-NER) machinery fails to resolve DNA damage (By similarity). Plays an important role in the activity of long-term repopulating hematopoietic stem cells (LT-HSCs) (PubMed:25185265). Is a regulator of stress granule assembly, required for their efficient formation (PubMed:35977029). Required for proper brain development and neocortex lamination (PubMed:35977029).</text>
</comment>
<comment type="subunit">
    <text evidence="1">Interacts with BMI1. Part of a complex consisting of UBAP2L, BMI1 and RNF2. Interacts with G3BP1 (via NTF2 domain); promoting stress granule formation.</text>
</comment>
<comment type="subcellular location">
    <subcellularLocation>
        <location evidence="1">Nucleus</location>
    </subcellularLocation>
    <subcellularLocation>
        <location evidence="1">Chromosome</location>
    </subcellularLocation>
    <subcellularLocation>
        <location evidence="1">Cytoplasm</location>
    </subcellularLocation>
    <subcellularLocation>
        <location evidence="1">Cytoplasm</location>
        <location evidence="1">Stress granule</location>
    </subcellularLocation>
    <text evidence="1">Associates with nuclear chromatin.</text>
</comment>
<comment type="alternative products">
    <event type="alternative splicing"/>
    <isoform>
        <id>Q80X50-1</id>
        <name>1</name>
        <sequence type="displayed"/>
    </isoform>
    <isoform>
        <id>Q80X50-2</id>
        <name>2</name>
        <sequence type="described" ref="VSP_019418 VSP_019421"/>
    </isoform>
    <isoform>
        <id>Q80X50-3</id>
        <name>3</name>
        <sequence type="described" ref="VSP_019419 VSP_019422"/>
    </isoform>
    <isoform>
        <id>Q80X50-4</id>
        <name>4</name>
        <sequence type="described" ref="VSP_019423"/>
    </isoform>
    <isoform>
        <id>Q80X50-5</id>
        <name>5</name>
        <sequence type="described" ref="VSP_019420"/>
    </isoform>
</comment>
<comment type="disruption phenotype">
    <text evidence="6">Ubap2l knockout results in a lethal phenotype in a majority of embryos. Mice with heterozygous Ubap2l deletion have cognitive impairment and behavioral abnormalities, including lower preference for social novelty, mild repetitive behavior, anxious-like behavior, and abnormal spatial working memory compared to wild-type mice. Stress granule intensity and numbers are reduced in developing brains of Ubap2l-deficient mice compared to controls, and neocortex development and lamination is abnormal.</text>
</comment>
<comment type="sequence caution" evidence="9">
    <conflict type="frameshift">
        <sequence resource="EMBL-CDS" id="BAC37777"/>
    </conflict>
</comment>
<proteinExistence type="evidence at protein level"/>
<sequence length="1107" mass="116799">MMTSVGTNRARGNWEQPQNQNQTQHKQRPQATAEQIRLAQMISDHNDADFEEKVKQLIDITGKNQDECVIALHDCNGDVNRAINVLLEGNPDTHSWEMVGKKKGVSGQKDGGQTESNEEGKENRDRDRDYSRRRGGPPRRGRGASRGREFRGQENGLDGTKSGGPSGRGTDRGRRGRGRGRGSSGRRGGRFSAQGMGTFNPADYAEPANTDDNYGNSSGNTWNNTGHFEPDDGTRLDFIGVEGSNYPRKFETAPGAWRTATEEWGTEDWNEDLSETKIFTASNVSSVPLPAENVTITAGQRIDLAVLLGKTPSSMENDSSNLDPSQAPSLAQPLVFSNSKQNAISQPASGSTFSHHSMVSMLGKGFGDVGEAKGGSTTGSQFLEQFKTAQALAQLAAQHSQSGSTTTSSWDMGSTTQSPSLVQYDLKSANDSTVHSPFTKRQAFTPSSTMMEVFLQEKPPAVATSTAAPPPPSSPLPSKSTSAPQMSPGSSDNQSSSPQPAQQKLKQQKKKTSLTSKIPALAVEMPGSADISGLNLQFGALQFGSEPVLSDYESTPTTSASSSQAPSSLYTSTASESSSTVSSNQSQESGYQSGPIQSTTYTSQNNAQGPLYEQRSTQTRRYPSSISSSPQKDLTQAKNGFSSVQATQLQTTQSVEGATGSAVKSESPSTSSIPSLNETVPAASLLTTANQHSSSLSGLSHTEEIPNTTTTQHSSALSTQQNTLSSSTSSGRTSTSTLLHTSVESEANLHSSSSTFSTTSSTVSAPPPVVSVSSSLNSGSSLGLSLGSNSTVTASTRSSVATTSGKAPPNLPPGVPPLLPNPYIMAPGLLHAYPPQVYGYDDLQMLQTRFPLDYYSIPFPTPTTPLTGRDGSLASNPYSGDLTKFGRGDASSPAPATTLAQPQQNQTQTHHTTQQTFLNPALPPGYSYTSLPYYTGVPGLPSTFQYGPAVFPVAPTSSKQHGVNVSVNASATPFQQPSGYGSHGYNTGVSVTSSNTGVPDISGSVYSKTQQSFEKQGFHSGTPAASFNLPSALGSGGPINPATAAAYPPAPFMHILTPHQQPHSQILHHHLQQDGQTGSGQRSQTSSIPQKPQTNKSAYNSYSWGAN</sequence>